<dbReference type="EC" id="4.3.1.3" evidence="1"/>
<dbReference type="EMBL" id="CP000026">
    <property type="protein sequence ID" value="AAV77870.1"/>
    <property type="molecule type" value="Genomic_DNA"/>
</dbReference>
<dbReference type="RefSeq" id="WP_001095234.1">
    <property type="nucleotide sequence ID" value="NC_006511.1"/>
</dbReference>
<dbReference type="SMR" id="Q5PG61"/>
<dbReference type="KEGG" id="spt:SPA1961"/>
<dbReference type="HOGENOM" id="CLU_014801_4_0_6"/>
<dbReference type="UniPathway" id="UPA00379">
    <property type="reaction ID" value="UER00549"/>
</dbReference>
<dbReference type="Proteomes" id="UP000008185">
    <property type="component" value="Chromosome"/>
</dbReference>
<dbReference type="GO" id="GO:0005737">
    <property type="term" value="C:cytoplasm"/>
    <property type="evidence" value="ECO:0007669"/>
    <property type="project" value="UniProtKB-SubCell"/>
</dbReference>
<dbReference type="GO" id="GO:0004397">
    <property type="term" value="F:histidine ammonia-lyase activity"/>
    <property type="evidence" value="ECO:0007669"/>
    <property type="project" value="UniProtKB-UniRule"/>
</dbReference>
<dbReference type="GO" id="GO:0019556">
    <property type="term" value="P:L-histidine catabolic process to glutamate and formamide"/>
    <property type="evidence" value="ECO:0007669"/>
    <property type="project" value="UniProtKB-UniPathway"/>
</dbReference>
<dbReference type="GO" id="GO:0019557">
    <property type="term" value="P:L-histidine catabolic process to glutamate and formate"/>
    <property type="evidence" value="ECO:0007669"/>
    <property type="project" value="UniProtKB-UniPathway"/>
</dbReference>
<dbReference type="CDD" id="cd00332">
    <property type="entry name" value="PAL-HAL"/>
    <property type="match status" value="1"/>
</dbReference>
<dbReference type="FunFam" id="1.10.275.10:FF:000005">
    <property type="entry name" value="Histidine ammonia-lyase"/>
    <property type="match status" value="1"/>
</dbReference>
<dbReference type="FunFam" id="1.20.200.10:FF:000003">
    <property type="entry name" value="Histidine ammonia-lyase"/>
    <property type="match status" value="1"/>
</dbReference>
<dbReference type="Gene3D" id="1.20.200.10">
    <property type="entry name" value="Fumarase/aspartase (Central domain)"/>
    <property type="match status" value="1"/>
</dbReference>
<dbReference type="Gene3D" id="1.10.275.10">
    <property type="entry name" value="Fumarase/aspartase (N-terminal domain)"/>
    <property type="match status" value="1"/>
</dbReference>
<dbReference type="HAMAP" id="MF_00229">
    <property type="entry name" value="His_ammonia_lyase"/>
    <property type="match status" value="1"/>
</dbReference>
<dbReference type="InterPro" id="IPR001106">
    <property type="entry name" value="Aromatic_Lyase"/>
</dbReference>
<dbReference type="InterPro" id="IPR024083">
    <property type="entry name" value="Fumarase/histidase_N"/>
</dbReference>
<dbReference type="InterPro" id="IPR005921">
    <property type="entry name" value="HutH"/>
</dbReference>
<dbReference type="InterPro" id="IPR008948">
    <property type="entry name" value="L-Aspartase-like"/>
</dbReference>
<dbReference type="InterPro" id="IPR022313">
    <property type="entry name" value="Phe/His_NH3-lyase_AS"/>
</dbReference>
<dbReference type="NCBIfam" id="TIGR01225">
    <property type="entry name" value="hutH"/>
    <property type="match status" value="1"/>
</dbReference>
<dbReference type="NCBIfam" id="NF006871">
    <property type="entry name" value="PRK09367.1"/>
    <property type="match status" value="1"/>
</dbReference>
<dbReference type="PANTHER" id="PTHR10362">
    <property type="entry name" value="HISTIDINE AMMONIA-LYASE"/>
    <property type="match status" value="1"/>
</dbReference>
<dbReference type="Pfam" id="PF00221">
    <property type="entry name" value="Lyase_aromatic"/>
    <property type="match status" value="1"/>
</dbReference>
<dbReference type="SUPFAM" id="SSF48557">
    <property type="entry name" value="L-aspartase-like"/>
    <property type="match status" value="1"/>
</dbReference>
<dbReference type="PROSITE" id="PS00488">
    <property type="entry name" value="PAL_HISTIDASE"/>
    <property type="match status" value="1"/>
</dbReference>
<accession>Q5PG61</accession>
<evidence type="ECO:0000255" key="1">
    <source>
        <dbReference type="HAMAP-Rule" id="MF_00229"/>
    </source>
</evidence>
<proteinExistence type="inferred from homology"/>
<gene>
    <name evidence="1" type="primary">hutH</name>
    <name type="ordered locus">SPA1961</name>
</gene>
<name>HUTH_SALPA</name>
<protein>
    <recommendedName>
        <fullName evidence="1">Histidine ammonia-lyase</fullName>
        <shortName evidence="1">Histidase</shortName>
        <ecNumber evidence="1">4.3.1.3</ecNumber>
    </recommendedName>
</protein>
<keyword id="KW-0963">Cytoplasm</keyword>
<keyword id="KW-0369">Histidine metabolism</keyword>
<keyword id="KW-0456">Lyase</keyword>
<feature type="chain" id="PRO_0000161024" description="Histidine ammonia-lyase">
    <location>
        <begin position="1"/>
        <end position="506"/>
    </location>
</feature>
<feature type="modified residue" description="2,3-didehydroalanine (Ser)" evidence="1">
    <location>
        <position position="144"/>
    </location>
</feature>
<feature type="cross-link" description="5-imidazolinone (Ala-Gly)" evidence="1">
    <location>
        <begin position="143"/>
        <end position="145"/>
    </location>
</feature>
<organism>
    <name type="scientific">Salmonella paratyphi A (strain ATCC 9150 / SARB42)</name>
    <dbReference type="NCBI Taxonomy" id="295319"/>
    <lineage>
        <taxon>Bacteria</taxon>
        <taxon>Pseudomonadati</taxon>
        <taxon>Pseudomonadota</taxon>
        <taxon>Gammaproteobacteria</taxon>
        <taxon>Enterobacterales</taxon>
        <taxon>Enterobacteriaceae</taxon>
        <taxon>Salmonella</taxon>
    </lineage>
</organism>
<sequence length="506" mass="53841">MNTMTLTPGQLSLSQLYDVWRHPVQLRLDASAIDGINASVACVNDIVAEGRTAYGINTGFGLLAQTRIADEDLQNLQRSLVLSHAAGVGDPLDDAMVRLIMVLKINSLARGFSGIRLSVIEALIALVNAGVYPLIPAKGSVGASGDLAPLAHLSLTLLGEGKARWQGEWLPAQAALKKAGLEPVALAAKEGLALLNGTQASTAFALRGLFEAQELFASAVVCGALTTEAVLGSRRPFDARIHAARGQQGQIDAARLFRHLLTDTSAIAESHHHCHKVQDPYSLRCQPQVMGACLTQLRQTKEVLLAEANAVSDNPLVFADAGEVISGGNFHAEPVAMAADNLALAIAEIGALSERRIALMMDKHMSQLPPFLVKNGGVNSGFMIAQVTAAALASENKALAHPHSVDSLPTSANQEDHVSMAPAAGRRLWEMAANTRGIIAVEWLAACQGIDLREGLTSSPLLEQARQTLRERVAHYTQDRFFAPDIECATTLLAQGALQRLLPDFM</sequence>
<comment type="catalytic activity">
    <reaction evidence="1">
        <text>L-histidine = trans-urocanate + NH4(+)</text>
        <dbReference type="Rhea" id="RHEA:21232"/>
        <dbReference type="ChEBI" id="CHEBI:17771"/>
        <dbReference type="ChEBI" id="CHEBI:28938"/>
        <dbReference type="ChEBI" id="CHEBI:57595"/>
        <dbReference type="EC" id="4.3.1.3"/>
    </reaction>
</comment>
<comment type="pathway">
    <text evidence="1">Amino-acid degradation; L-histidine degradation into L-glutamate; N-formimidoyl-L-glutamate from L-histidine: step 1/3.</text>
</comment>
<comment type="subcellular location">
    <subcellularLocation>
        <location evidence="1">Cytoplasm</location>
    </subcellularLocation>
</comment>
<comment type="PTM">
    <text evidence="1">Contains an active site 4-methylidene-imidazol-5-one (MIO), which is formed autocatalytically by cyclization and dehydration of residues Ala-Ser-Gly.</text>
</comment>
<comment type="similarity">
    <text evidence="1">Belongs to the PAL/histidase family.</text>
</comment>
<reference key="1">
    <citation type="journal article" date="2004" name="Nat. Genet.">
        <title>Comparison of genome degradation in Paratyphi A and Typhi, human-restricted serovars of Salmonella enterica that cause typhoid.</title>
        <authorList>
            <person name="McClelland M."/>
            <person name="Sanderson K.E."/>
            <person name="Clifton S.W."/>
            <person name="Latreille P."/>
            <person name="Porwollik S."/>
            <person name="Sabo A."/>
            <person name="Meyer R."/>
            <person name="Bieri T."/>
            <person name="Ozersky P."/>
            <person name="McLellan M."/>
            <person name="Harkins C.R."/>
            <person name="Wang C."/>
            <person name="Nguyen C."/>
            <person name="Berghoff A."/>
            <person name="Elliott G."/>
            <person name="Kohlberg S."/>
            <person name="Strong C."/>
            <person name="Du F."/>
            <person name="Carter J."/>
            <person name="Kremizki C."/>
            <person name="Layman D."/>
            <person name="Leonard S."/>
            <person name="Sun H."/>
            <person name="Fulton L."/>
            <person name="Nash W."/>
            <person name="Miner T."/>
            <person name="Minx P."/>
            <person name="Delehaunty K."/>
            <person name="Fronick C."/>
            <person name="Magrini V."/>
            <person name="Nhan M."/>
            <person name="Warren W."/>
            <person name="Florea L."/>
            <person name="Spieth J."/>
            <person name="Wilson R.K."/>
        </authorList>
    </citation>
    <scope>NUCLEOTIDE SEQUENCE [LARGE SCALE GENOMIC DNA]</scope>
    <source>
        <strain>ATCC 9150 / SARB42</strain>
    </source>
</reference>